<protein>
    <recommendedName>
        <fullName>Leukocyte receptor cluster member 9</fullName>
    </recommendedName>
</protein>
<reference key="1">
    <citation type="journal article" date="2005" name="Science">
        <title>The transcriptional landscape of the mammalian genome.</title>
        <authorList>
            <person name="Carninci P."/>
            <person name="Kasukawa T."/>
            <person name="Katayama S."/>
            <person name="Gough J."/>
            <person name="Frith M.C."/>
            <person name="Maeda N."/>
            <person name="Oyama R."/>
            <person name="Ravasi T."/>
            <person name="Lenhard B."/>
            <person name="Wells C."/>
            <person name="Kodzius R."/>
            <person name="Shimokawa K."/>
            <person name="Bajic V.B."/>
            <person name="Brenner S.E."/>
            <person name="Batalov S."/>
            <person name="Forrest A.R."/>
            <person name="Zavolan M."/>
            <person name="Davis M.J."/>
            <person name="Wilming L.G."/>
            <person name="Aidinis V."/>
            <person name="Allen J.E."/>
            <person name="Ambesi-Impiombato A."/>
            <person name="Apweiler R."/>
            <person name="Aturaliya R.N."/>
            <person name="Bailey T.L."/>
            <person name="Bansal M."/>
            <person name="Baxter L."/>
            <person name="Beisel K.W."/>
            <person name="Bersano T."/>
            <person name="Bono H."/>
            <person name="Chalk A.M."/>
            <person name="Chiu K.P."/>
            <person name="Choudhary V."/>
            <person name="Christoffels A."/>
            <person name="Clutterbuck D.R."/>
            <person name="Crowe M.L."/>
            <person name="Dalla E."/>
            <person name="Dalrymple B.P."/>
            <person name="de Bono B."/>
            <person name="Della Gatta G."/>
            <person name="di Bernardo D."/>
            <person name="Down T."/>
            <person name="Engstrom P."/>
            <person name="Fagiolini M."/>
            <person name="Faulkner G."/>
            <person name="Fletcher C.F."/>
            <person name="Fukushima T."/>
            <person name="Furuno M."/>
            <person name="Futaki S."/>
            <person name="Gariboldi M."/>
            <person name="Georgii-Hemming P."/>
            <person name="Gingeras T.R."/>
            <person name="Gojobori T."/>
            <person name="Green R.E."/>
            <person name="Gustincich S."/>
            <person name="Harbers M."/>
            <person name="Hayashi Y."/>
            <person name="Hensch T.K."/>
            <person name="Hirokawa N."/>
            <person name="Hill D."/>
            <person name="Huminiecki L."/>
            <person name="Iacono M."/>
            <person name="Ikeo K."/>
            <person name="Iwama A."/>
            <person name="Ishikawa T."/>
            <person name="Jakt M."/>
            <person name="Kanapin A."/>
            <person name="Katoh M."/>
            <person name="Kawasawa Y."/>
            <person name="Kelso J."/>
            <person name="Kitamura H."/>
            <person name="Kitano H."/>
            <person name="Kollias G."/>
            <person name="Krishnan S.P."/>
            <person name="Kruger A."/>
            <person name="Kummerfeld S.K."/>
            <person name="Kurochkin I.V."/>
            <person name="Lareau L.F."/>
            <person name="Lazarevic D."/>
            <person name="Lipovich L."/>
            <person name="Liu J."/>
            <person name="Liuni S."/>
            <person name="McWilliam S."/>
            <person name="Madan Babu M."/>
            <person name="Madera M."/>
            <person name="Marchionni L."/>
            <person name="Matsuda H."/>
            <person name="Matsuzawa S."/>
            <person name="Miki H."/>
            <person name="Mignone F."/>
            <person name="Miyake S."/>
            <person name="Morris K."/>
            <person name="Mottagui-Tabar S."/>
            <person name="Mulder N."/>
            <person name="Nakano N."/>
            <person name="Nakauchi H."/>
            <person name="Ng P."/>
            <person name="Nilsson R."/>
            <person name="Nishiguchi S."/>
            <person name="Nishikawa S."/>
            <person name="Nori F."/>
            <person name="Ohara O."/>
            <person name="Okazaki Y."/>
            <person name="Orlando V."/>
            <person name="Pang K.C."/>
            <person name="Pavan W.J."/>
            <person name="Pavesi G."/>
            <person name="Pesole G."/>
            <person name="Petrovsky N."/>
            <person name="Piazza S."/>
            <person name="Reed J."/>
            <person name="Reid J.F."/>
            <person name="Ring B.Z."/>
            <person name="Ringwald M."/>
            <person name="Rost B."/>
            <person name="Ruan Y."/>
            <person name="Salzberg S.L."/>
            <person name="Sandelin A."/>
            <person name="Schneider C."/>
            <person name="Schoenbach C."/>
            <person name="Sekiguchi K."/>
            <person name="Semple C.A."/>
            <person name="Seno S."/>
            <person name="Sessa L."/>
            <person name="Sheng Y."/>
            <person name="Shibata Y."/>
            <person name="Shimada H."/>
            <person name="Shimada K."/>
            <person name="Silva D."/>
            <person name="Sinclair B."/>
            <person name="Sperling S."/>
            <person name="Stupka E."/>
            <person name="Sugiura K."/>
            <person name="Sultana R."/>
            <person name="Takenaka Y."/>
            <person name="Taki K."/>
            <person name="Tammoja K."/>
            <person name="Tan S.L."/>
            <person name="Tang S."/>
            <person name="Taylor M.S."/>
            <person name="Tegner J."/>
            <person name="Teichmann S.A."/>
            <person name="Ueda H.R."/>
            <person name="van Nimwegen E."/>
            <person name="Verardo R."/>
            <person name="Wei C.L."/>
            <person name="Yagi K."/>
            <person name="Yamanishi H."/>
            <person name="Zabarovsky E."/>
            <person name="Zhu S."/>
            <person name="Zimmer A."/>
            <person name="Hide W."/>
            <person name="Bult C."/>
            <person name="Grimmond S.M."/>
            <person name="Teasdale R.D."/>
            <person name="Liu E.T."/>
            <person name="Brusic V."/>
            <person name="Quackenbush J."/>
            <person name="Wahlestedt C."/>
            <person name="Mattick J.S."/>
            <person name="Hume D.A."/>
            <person name="Kai C."/>
            <person name="Sasaki D."/>
            <person name="Tomaru Y."/>
            <person name="Fukuda S."/>
            <person name="Kanamori-Katayama M."/>
            <person name="Suzuki M."/>
            <person name="Aoki J."/>
            <person name="Arakawa T."/>
            <person name="Iida J."/>
            <person name="Imamura K."/>
            <person name="Itoh M."/>
            <person name="Kato T."/>
            <person name="Kawaji H."/>
            <person name="Kawagashira N."/>
            <person name="Kawashima T."/>
            <person name="Kojima M."/>
            <person name="Kondo S."/>
            <person name="Konno H."/>
            <person name="Nakano K."/>
            <person name="Ninomiya N."/>
            <person name="Nishio T."/>
            <person name="Okada M."/>
            <person name="Plessy C."/>
            <person name="Shibata K."/>
            <person name="Shiraki T."/>
            <person name="Suzuki S."/>
            <person name="Tagami M."/>
            <person name="Waki K."/>
            <person name="Watahiki A."/>
            <person name="Okamura-Oho Y."/>
            <person name="Suzuki H."/>
            <person name="Kawai J."/>
            <person name="Hayashizaki Y."/>
        </authorList>
    </citation>
    <scope>NUCLEOTIDE SEQUENCE [LARGE SCALE MRNA]</scope>
    <source>
        <strain>C57BL/6J</strain>
        <strain>NOD</strain>
        <tissue>Amnion</tissue>
        <tissue>Medulla oblongata</tissue>
        <tissue>Spinal cord</tissue>
    </source>
</reference>
<reference key="2">
    <citation type="journal article" date="2009" name="PLoS Biol.">
        <title>Lineage-specific biology revealed by a finished genome assembly of the mouse.</title>
        <authorList>
            <person name="Church D.M."/>
            <person name="Goodstadt L."/>
            <person name="Hillier L.W."/>
            <person name="Zody M.C."/>
            <person name="Goldstein S."/>
            <person name="She X."/>
            <person name="Bult C.J."/>
            <person name="Agarwala R."/>
            <person name="Cherry J.L."/>
            <person name="DiCuccio M."/>
            <person name="Hlavina W."/>
            <person name="Kapustin Y."/>
            <person name="Meric P."/>
            <person name="Maglott D."/>
            <person name="Birtle Z."/>
            <person name="Marques A.C."/>
            <person name="Graves T."/>
            <person name="Zhou S."/>
            <person name="Teague B."/>
            <person name="Potamousis K."/>
            <person name="Churas C."/>
            <person name="Place M."/>
            <person name="Herschleb J."/>
            <person name="Runnheim R."/>
            <person name="Forrest D."/>
            <person name="Amos-Landgraf J."/>
            <person name="Schwartz D.C."/>
            <person name="Cheng Z."/>
            <person name="Lindblad-Toh K."/>
            <person name="Eichler E.E."/>
            <person name="Ponting C.P."/>
        </authorList>
    </citation>
    <scope>NUCLEOTIDE SEQUENCE [LARGE SCALE GENOMIC DNA]</scope>
    <source>
        <strain>C57BL/6J</strain>
    </source>
</reference>
<reference key="3">
    <citation type="journal article" date="2004" name="Genome Res.">
        <title>The status, quality, and expansion of the NIH full-length cDNA project: the Mammalian Gene Collection (MGC).</title>
        <authorList>
            <consortium name="The MGC Project Team"/>
        </authorList>
    </citation>
    <scope>NUCLEOTIDE SEQUENCE [LARGE SCALE MRNA]</scope>
</reference>
<reference key="4">
    <citation type="submission" date="2005-07" db="EMBL/GenBank/DDBJ databases">
        <authorList>
            <person name="Mural R.J."/>
            <person name="Adams M.D."/>
            <person name="Myers E.W."/>
            <person name="Smith H.O."/>
            <person name="Venter J.C."/>
        </authorList>
    </citation>
    <scope>NUCLEOTIDE SEQUENCE [LARGE SCALE GENOMIC DNA]</scope>
</reference>
<feature type="chain" id="PRO_0000415826" description="Leukocyte receptor cluster member 9">
    <location>
        <begin position="1"/>
        <end position="485"/>
    </location>
</feature>
<feature type="zinc finger region" description="C3H1-type" evidence="1">
    <location>
        <begin position="8"/>
        <end position="35"/>
    </location>
</feature>
<feature type="region of interest" description="Disordered" evidence="2">
    <location>
        <begin position="212"/>
        <end position="247"/>
    </location>
</feature>
<feature type="sequence conflict" description="In Ref. 1; BAE22187." evidence="3" ref="1">
    <original>R</original>
    <variation>G</variation>
    <location>
        <position position="62"/>
    </location>
</feature>
<feature type="sequence conflict" description="In Ref. 1; BAC41185." evidence="3" ref="1">
    <original>R</original>
    <variation>G</variation>
    <location>
        <position position="63"/>
    </location>
</feature>
<feature type="sequence conflict" description="In Ref. 1; BAC41185." evidence="3" ref="1">
    <original>A</original>
    <variation>V</variation>
    <location>
        <position position="398"/>
    </location>
</feature>
<accession>Q8BTN6</accession>
<accession>Q3UYM5</accession>
<accession>Q8BTG8</accession>
<proteinExistence type="evidence at transcript level"/>
<keyword id="KW-0479">Metal-binding</keyword>
<keyword id="KW-1185">Reference proteome</keyword>
<keyword id="KW-0862">Zinc</keyword>
<keyword id="KW-0863">Zinc-finger</keyword>
<dbReference type="EMBL" id="AK089196">
    <property type="protein sequence ID" value="BAC40788.1"/>
    <property type="molecule type" value="mRNA"/>
</dbReference>
<dbReference type="EMBL" id="AK090365">
    <property type="protein sequence ID" value="BAC41185.1"/>
    <property type="molecule type" value="mRNA"/>
</dbReference>
<dbReference type="EMBL" id="AK134559">
    <property type="protein sequence ID" value="BAE22187.1"/>
    <property type="molecule type" value="mRNA"/>
</dbReference>
<dbReference type="EMBL" id="AK147019">
    <property type="protein sequence ID" value="BAE27612.1"/>
    <property type="molecule type" value="mRNA"/>
</dbReference>
<dbReference type="EMBL" id="AC101941">
    <property type="status" value="NOT_ANNOTATED_CDS"/>
    <property type="molecule type" value="Genomic_DNA"/>
</dbReference>
<dbReference type="EMBL" id="BC116676">
    <property type="protein sequence ID" value="AAI16677.1"/>
    <property type="molecule type" value="mRNA"/>
</dbReference>
<dbReference type="EMBL" id="CH466627">
    <property type="protein sequence ID" value="EDL31225.1"/>
    <property type="molecule type" value="Genomic_DNA"/>
</dbReference>
<dbReference type="CCDS" id="CCDS20732.1"/>
<dbReference type="RefSeq" id="NP_780738.1">
    <property type="nucleotide sequence ID" value="NM_175529.3"/>
</dbReference>
<dbReference type="SMR" id="Q8BTN6"/>
<dbReference type="FunCoup" id="Q8BTN6">
    <property type="interactions" value="1"/>
</dbReference>
<dbReference type="STRING" id="10090.ENSMUSP00000061079"/>
<dbReference type="iPTMnet" id="Q8BTN6"/>
<dbReference type="PhosphoSitePlus" id="Q8BTN6"/>
<dbReference type="PaxDb" id="10090-ENSMUSP00000061079"/>
<dbReference type="PeptideAtlas" id="Q8BTN6"/>
<dbReference type="ProteomicsDB" id="291938"/>
<dbReference type="Pumba" id="Q8BTN6"/>
<dbReference type="Antibodypedia" id="72623">
    <property type="antibodies" value="73 antibodies from 13 providers"/>
</dbReference>
<dbReference type="DNASU" id="243813"/>
<dbReference type="Ensembl" id="ENSMUST00000058358.8">
    <property type="protein sequence ID" value="ENSMUSP00000061079.7"/>
    <property type="gene ID" value="ENSMUSG00000043432.8"/>
</dbReference>
<dbReference type="GeneID" id="243813"/>
<dbReference type="KEGG" id="mmu:243813"/>
<dbReference type="UCSC" id="uc009exd.1">
    <property type="organism name" value="mouse"/>
</dbReference>
<dbReference type="AGR" id="MGI:2444509"/>
<dbReference type="CTD" id="94059"/>
<dbReference type="MGI" id="MGI:2444509">
    <property type="gene designation" value="Leng9"/>
</dbReference>
<dbReference type="VEuPathDB" id="HostDB:ENSMUSG00000043432"/>
<dbReference type="eggNOG" id="ENOG502QS4D">
    <property type="taxonomic scope" value="Eukaryota"/>
</dbReference>
<dbReference type="GeneTree" id="ENSGT00390000010577"/>
<dbReference type="HOGENOM" id="CLU_044135_0_0_1"/>
<dbReference type="InParanoid" id="Q8BTN6"/>
<dbReference type="OMA" id="LGKLWLC"/>
<dbReference type="OrthoDB" id="10263155at2759"/>
<dbReference type="PhylomeDB" id="Q8BTN6"/>
<dbReference type="TreeFam" id="TF329287"/>
<dbReference type="BioGRID-ORCS" id="243813">
    <property type="hits" value="1 hit in 79 CRISPR screens"/>
</dbReference>
<dbReference type="PRO" id="PR:Q8BTN6"/>
<dbReference type="Proteomes" id="UP000000589">
    <property type="component" value="Chromosome 7"/>
</dbReference>
<dbReference type="RNAct" id="Q8BTN6">
    <property type="molecule type" value="protein"/>
</dbReference>
<dbReference type="Bgee" id="ENSMUSG00000043432">
    <property type="expression patterns" value="Expressed in jejunum and 124 other cell types or tissues"/>
</dbReference>
<dbReference type="GO" id="GO:0008270">
    <property type="term" value="F:zinc ion binding"/>
    <property type="evidence" value="ECO:0007669"/>
    <property type="project" value="UniProtKB-KW"/>
</dbReference>
<dbReference type="Gene3D" id="3.90.1140.10">
    <property type="entry name" value="Cyclic phosphodiesterase"/>
    <property type="match status" value="1"/>
</dbReference>
<dbReference type="Gene3D" id="4.10.1000.10">
    <property type="entry name" value="Zinc finger, CCCH-type"/>
    <property type="match status" value="1"/>
</dbReference>
<dbReference type="InterPro" id="IPR019510">
    <property type="entry name" value="AKAP7-like_phosphoesterase"/>
</dbReference>
<dbReference type="InterPro" id="IPR009097">
    <property type="entry name" value="Cyclic_Pdiesterase"/>
</dbReference>
<dbReference type="InterPro" id="IPR042653">
    <property type="entry name" value="Leng9"/>
</dbReference>
<dbReference type="InterPro" id="IPR040459">
    <property type="entry name" value="MJ1316"/>
</dbReference>
<dbReference type="InterPro" id="IPR041367">
    <property type="entry name" value="Znf-CCCH_4"/>
</dbReference>
<dbReference type="InterPro" id="IPR000571">
    <property type="entry name" value="Znf_CCCH"/>
</dbReference>
<dbReference type="PANTHER" id="PTHR46729">
    <property type="entry name" value="LEUKOCYTE RECEPTOR CLUSTER MEMBER 9"/>
    <property type="match status" value="1"/>
</dbReference>
<dbReference type="PANTHER" id="PTHR46729:SF1">
    <property type="entry name" value="LEUKOCYTE RECEPTOR CLUSTER MEMBER 9"/>
    <property type="match status" value="1"/>
</dbReference>
<dbReference type="Pfam" id="PF10469">
    <property type="entry name" value="AKAP7_NLS"/>
    <property type="match status" value="1"/>
</dbReference>
<dbReference type="Pfam" id="PF04457">
    <property type="entry name" value="MJ1316"/>
    <property type="match status" value="1"/>
</dbReference>
<dbReference type="Pfam" id="PF18044">
    <property type="entry name" value="zf-CCCH_4"/>
    <property type="match status" value="1"/>
</dbReference>
<dbReference type="SMART" id="SM00356">
    <property type="entry name" value="ZnF_C3H1"/>
    <property type="match status" value="1"/>
</dbReference>
<dbReference type="SUPFAM" id="SSF55144">
    <property type="entry name" value="LigT-like"/>
    <property type="match status" value="1"/>
</dbReference>
<dbReference type="PROSITE" id="PS50103">
    <property type="entry name" value="ZF_C3H1"/>
    <property type="match status" value="1"/>
</dbReference>
<name>LENG9_MOUSE</name>
<organism>
    <name type="scientific">Mus musculus</name>
    <name type="common">Mouse</name>
    <dbReference type="NCBI Taxonomy" id="10090"/>
    <lineage>
        <taxon>Eukaryota</taxon>
        <taxon>Metazoa</taxon>
        <taxon>Chordata</taxon>
        <taxon>Craniata</taxon>
        <taxon>Vertebrata</taxon>
        <taxon>Euteleostomi</taxon>
        <taxon>Mammalia</taxon>
        <taxon>Eutheria</taxon>
        <taxon>Euarchontoglires</taxon>
        <taxon>Glires</taxon>
        <taxon>Rodentia</taxon>
        <taxon>Myomorpha</taxon>
        <taxon>Muroidea</taxon>
        <taxon>Muridae</taxon>
        <taxon>Murinae</taxon>
        <taxon>Mus</taxon>
        <taxon>Mus</taxon>
    </lineage>
</organism>
<sequence>MEASADSSEAPAVCRFFLEGRCRFGARCRQPHPGAPAPSPVVTQPEAGSKKPALRTAADVIRRIRWDPRLDPADFSVGYTDRFLGVQEEPFCAFCWDEPLAALGPGVLAVPQHRIRYFRFRGRLVWDRASRTDLIFGSGSVAGRGPTILDALDGGDEHWTEVTAEIPDTEKTGVGLEGLDTQDALAEAGGNPTGTGLDSGLETHEEGGAIKETRTGLDSSLETPEVDGPTKETGLNGTTELEMPDPSMNFSGVKISSVEEPRATLLPQWQAQGMETKGLSAEEMGNVWDPGVWPDDRRAPRQPRPTHFVALMVTESGLRAEVVKAQEHLVRIAPSCAEFLVPAQALHLTVVLLRLTGPGEEAAAARALRRAILKPGLQAPSQLQFRDLVLLGHHVLCATPSPTLTGMAQTLNQRLEAEGLRVVLLPELQPHLTLAKVPHGTQVCLPKPEYTLNQELGRQPLSKLWLCRMGRAGHSYLPLVEISLK</sequence>
<gene>
    <name type="primary">Leng9</name>
</gene>
<evidence type="ECO:0000255" key="1">
    <source>
        <dbReference type="PROSITE-ProRule" id="PRU00723"/>
    </source>
</evidence>
<evidence type="ECO:0000256" key="2">
    <source>
        <dbReference type="SAM" id="MobiDB-lite"/>
    </source>
</evidence>
<evidence type="ECO:0000305" key="3"/>